<keyword id="KW-0249">Electron transport</keyword>
<keyword id="KW-0472">Membrane</keyword>
<keyword id="KW-0496">Mitochondrion</keyword>
<keyword id="KW-0520">NAD</keyword>
<keyword id="KW-0679">Respiratory chain</keyword>
<keyword id="KW-1278">Translocase</keyword>
<keyword id="KW-0812">Transmembrane</keyword>
<keyword id="KW-1133">Transmembrane helix</keyword>
<keyword id="KW-0813">Transport</keyword>
<keyword id="KW-0830">Ubiquinone</keyword>
<name>NU6M_LARCA</name>
<comment type="function">
    <text evidence="1">Core subunit of the mitochondrial membrane respiratory chain NADH dehydrogenase (Complex I) that is believed to belong to the minimal assembly required for catalysis. Complex I functions in the transfer of electrons from NADH to the respiratory chain. The immediate electron acceptor for the enzyme is believed to be ubiquinone (By similarity).</text>
</comment>
<comment type="catalytic activity">
    <reaction>
        <text>a ubiquinone + NADH + 5 H(+)(in) = a ubiquinol + NAD(+) + 4 H(+)(out)</text>
        <dbReference type="Rhea" id="RHEA:29091"/>
        <dbReference type="Rhea" id="RHEA-COMP:9565"/>
        <dbReference type="Rhea" id="RHEA-COMP:9566"/>
        <dbReference type="ChEBI" id="CHEBI:15378"/>
        <dbReference type="ChEBI" id="CHEBI:16389"/>
        <dbReference type="ChEBI" id="CHEBI:17976"/>
        <dbReference type="ChEBI" id="CHEBI:57540"/>
        <dbReference type="ChEBI" id="CHEBI:57945"/>
        <dbReference type="EC" id="7.1.1.2"/>
    </reaction>
</comment>
<comment type="subcellular location">
    <subcellularLocation>
        <location evidence="3">Mitochondrion membrane</location>
        <topology evidence="3">Multi-pass membrane protein</topology>
    </subcellularLocation>
</comment>
<comment type="similarity">
    <text evidence="3">Belongs to the complex I subunit 6 family.</text>
</comment>
<sequence length="173" mass="18138">MTYFVLFLGLCFVLGGLAVASNPSPYYGVVGLVVASVAGCGWLLSLGVSFVSLVLFMVYLGGMLVVFVYSVSLAADPFPEAWGDWRVVGYGAGFVLVLVVGGVVGGLVEFWHPGVITVDSGGMFSVRLDFSGVAMFYSCGVGMFLVAGWGLLLTLFVVLELVRGLSRGAIRAV</sequence>
<reference key="1">
    <citation type="journal article" date="1994" name="Curr. Genet.">
        <title>Intragenic rearrangements in the mitochondrial NADH dehydrogenase subunit 6 gene of vertebrates.</title>
        <authorList>
            <person name="Moum T."/>
            <person name="Willassen N.P."/>
            <person name="Johansen S."/>
        </authorList>
    </citation>
    <scope>NUCLEOTIDE SEQUENCE [GENOMIC DNA]</scope>
</reference>
<evidence type="ECO:0000250" key="1"/>
<evidence type="ECO:0000255" key="2"/>
<evidence type="ECO:0000305" key="3"/>
<organism>
    <name type="scientific">Larus canus</name>
    <name type="common">Common gull</name>
    <name type="synonym">Mew gull</name>
    <dbReference type="NCBI Taxonomy" id="28681"/>
    <lineage>
        <taxon>Eukaryota</taxon>
        <taxon>Metazoa</taxon>
        <taxon>Chordata</taxon>
        <taxon>Craniata</taxon>
        <taxon>Vertebrata</taxon>
        <taxon>Euteleostomi</taxon>
        <taxon>Archelosauria</taxon>
        <taxon>Archosauria</taxon>
        <taxon>Dinosauria</taxon>
        <taxon>Saurischia</taxon>
        <taxon>Theropoda</taxon>
        <taxon>Coelurosauria</taxon>
        <taxon>Aves</taxon>
        <taxon>Neognathae</taxon>
        <taxon>Neoaves</taxon>
        <taxon>Charadriiformes</taxon>
        <taxon>Laridae</taxon>
        <taxon>Larus</taxon>
    </lineage>
</organism>
<gene>
    <name type="primary">MT-ND6</name>
    <name type="synonym">MTND6</name>
    <name type="synonym">NADH6</name>
    <name type="synonym">ND6</name>
</gene>
<geneLocation type="mitochondrion"/>
<dbReference type="EC" id="7.1.1.2"/>
<dbReference type="EMBL" id="X73932">
    <property type="protein sequence ID" value="CAA52137.1"/>
    <property type="molecule type" value="Genomic_DNA"/>
</dbReference>
<dbReference type="PIR" id="S44413">
    <property type="entry name" value="S44413"/>
</dbReference>
<dbReference type="SMR" id="P41322"/>
<dbReference type="GO" id="GO:0031966">
    <property type="term" value="C:mitochondrial membrane"/>
    <property type="evidence" value="ECO:0007669"/>
    <property type="project" value="UniProtKB-SubCell"/>
</dbReference>
<dbReference type="GO" id="GO:0008137">
    <property type="term" value="F:NADH dehydrogenase (ubiquinone) activity"/>
    <property type="evidence" value="ECO:0007669"/>
    <property type="project" value="UniProtKB-EC"/>
</dbReference>
<dbReference type="Gene3D" id="1.20.120.1200">
    <property type="entry name" value="NADH-ubiquinone/plastoquinone oxidoreductase chain 6, subunit NuoJ"/>
    <property type="match status" value="1"/>
</dbReference>
<dbReference type="InterPro" id="IPR050269">
    <property type="entry name" value="ComplexI_Subunit6"/>
</dbReference>
<dbReference type="InterPro" id="IPR001457">
    <property type="entry name" value="NADH_UbQ/plastoQ_OxRdtase_su6"/>
</dbReference>
<dbReference type="InterPro" id="IPR042106">
    <property type="entry name" value="Nuo/plastoQ_OxRdtase_6_NuoJ"/>
</dbReference>
<dbReference type="PANTHER" id="PTHR11435">
    <property type="entry name" value="NADH UBIQUINONE OXIDOREDUCTASE SUBUNIT ND6"/>
    <property type="match status" value="1"/>
</dbReference>
<dbReference type="PANTHER" id="PTHR11435:SF1">
    <property type="entry name" value="NADH-UBIQUINONE OXIDOREDUCTASE CHAIN 6"/>
    <property type="match status" value="1"/>
</dbReference>
<dbReference type="Pfam" id="PF00499">
    <property type="entry name" value="Oxidored_q3"/>
    <property type="match status" value="1"/>
</dbReference>
<accession>P41322</accession>
<protein>
    <recommendedName>
        <fullName>NADH-ubiquinone oxidoreductase chain 6</fullName>
        <ecNumber>7.1.1.2</ecNumber>
    </recommendedName>
    <alternativeName>
        <fullName>NADH dehydrogenase subunit 6</fullName>
    </alternativeName>
</protein>
<feature type="chain" id="PRO_0000118293" description="NADH-ubiquinone oxidoreductase chain 6">
    <location>
        <begin position="1"/>
        <end position="173"/>
    </location>
</feature>
<feature type="transmembrane region" description="Helical" evidence="2">
    <location>
        <begin position="1"/>
        <end position="21"/>
    </location>
</feature>
<feature type="transmembrane region" description="Helical" evidence="2">
    <location>
        <begin position="27"/>
        <end position="47"/>
    </location>
</feature>
<feature type="transmembrane region" description="Helical" evidence="2">
    <location>
        <begin position="48"/>
        <end position="68"/>
    </location>
</feature>
<feature type="transmembrane region" description="Helical" evidence="2">
    <location>
        <begin position="87"/>
        <end position="107"/>
    </location>
</feature>
<feature type="transmembrane region" description="Helical" evidence="2">
    <location>
        <begin position="139"/>
        <end position="159"/>
    </location>
</feature>
<proteinExistence type="inferred from homology"/>